<keyword id="KW-0963">Cytoplasm</keyword>
<keyword id="KW-0255">Endonuclease</keyword>
<keyword id="KW-0378">Hydrolase</keyword>
<keyword id="KW-0479">Metal-binding</keyword>
<keyword id="KW-0540">Nuclease</keyword>
<keyword id="KW-1185">Reference proteome</keyword>
<keyword id="KW-0690">Ribosome biogenesis</keyword>
<keyword id="KW-0698">rRNA processing</keyword>
<keyword id="KW-0862">Zinc</keyword>
<organism>
    <name type="scientific">Stutzerimonas stutzeri (strain A1501)</name>
    <name type="common">Pseudomonas stutzeri</name>
    <dbReference type="NCBI Taxonomy" id="379731"/>
    <lineage>
        <taxon>Bacteria</taxon>
        <taxon>Pseudomonadati</taxon>
        <taxon>Pseudomonadota</taxon>
        <taxon>Gammaproteobacteria</taxon>
        <taxon>Pseudomonadales</taxon>
        <taxon>Pseudomonadaceae</taxon>
        <taxon>Stutzerimonas</taxon>
    </lineage>
</organism>
<name>YBEY_STUS1</name>
<reference key="1">
    <citation type="journal article" date="2008" name="Proc. Natl. Acad. Sci. U.S.A.">
        <title>Nitrogen fixation island and rhizosphere competence traits in the genome of root-associated Pseudomonas stutzeri A1501.</title>
        <authorList>
            <person name="Yan Y."/>
            <person name="Yang J."/>
            <person name="Dou Y."/>
            <person name="Chen M."/>
            <person name="Ping S."/>
            <person name="Peng J."/>
            <person name="Lu W."/>
            <person name="Zhang W."/>
            <person name="Yao Z."/>
            <person name="Li H."/>
            <person name="Liu W."/>
            <person name="He S."/>
            <person name="Geng L."/>
            <person name="Zhang X."/>
            <person name="Yang F."/>
            <person name="Yu H."/>
            <person name="Zhan Y."/>
            <person name="Li D."/>
            <person name="Lin Z."/>
            <person name="Wang Y."/>
            <person name="Elmerich C."/>
            <person name="Lin M."/>
            <person name="Jin Q."/>
        </authorList>
    </citation>
    <scope>NUCLEOTIDE SEQUENCE [LARGE SCALE GENOMIC DNA]</scope>
    <source>
        <strain>A1501</strain>
    </source>
</reference>
<proteinExistence type="inferred from homology"/>
<gene>
    <name evidence="1" type="primary">ybeY</name>
    <name type="ordered locus">PST_3763</name>
</gene>
<evidence type="ECO:0000255" key="1">
    <source>
        <dbReference type="HAMAP-Rule" id="MF_00009"/>
    </source>
</evidence>
<accession>A4VQY5</accession>
<dbReference type="EC" id="3.1.-.-" evidence="1"/>
<dbReference type="EMBL" id="CP000304">
    <property type="protein sequence ID" value="ABP81386.1"/>
    <property type="molecule type" value="Genomic_DNA"/>
</dbReference>
<dbReference type="RefSeq" id="WP_011914771.1">
    <property type="nucleotide sequence ID" value="NC_009434.1"/>
</dbReference>
<dbReference type="SMR" id="A4VQY5"/>
<dbReference type="KEGG" id="psa:PST_3763"/>
<dbReference type="eggNOG" id="COG0319">
    <property type="taxonomic scope" value="Bacteria"/>
</dbReference>
<dbReference type="HOGENOM" id="CLU_106710_0_1_6"/>
<dbReference type="Proteomes" id="UP000000233">
    <property type="component" value="Chromosome"/>
</dbReference>
<dbReference type="GO" id="GO:0005737">
    <property type="term" value="C:cytoplasm"/>
    <property type="evidence" value="ECO:0007669"/>
    <property type="project" value="UniProtKB-SubCell"/>
</dbReference>
<dbReference type="GO" id="GO:0004222">
    <property type="term" value="F:metalloendopeptidase activity"/>
    <property type="evidence" value="ECO:0007669"/>
    <property type="project" value="InterPro"/>
</dbReference>
<dbReference type="GO" id="GO:0004521">
    <property type="term" value="F:RNA endonuclease activity"/>
    <property type="evidence" value="ECO:0007669"/>
    <property type="project" value="UniProtKB-UniRule"/>
</dbReference>
<dbReference type="GO" id="GO:0008270">
    <property type="term" value="F:zinc ion binding"/>
    <property type="evidence" value="ECO:0007669"/>
    <property type="project" value="UniProtKB-UniRule"/>
</dbReference>
<dbReference type="GO" id="GO:0006364">
    <property type="term" value="P:rRNA processing"/>
    <property type="evidence" value="ECO:0007669"/>
    <property type="project" value="UniProtKB-UniRule"/>
</dbReference>
<dbReference type="Gene3D" id="3.40.390.30">
    <property type="entry name" value="Metalloproteases ('zincins'), catalytic domain"/>
    <property type="match status" value="1"/>
</dbReference>
<dbReference type="HAMAP" id="MF_00009">
    <property type="entry name" value="Endoribonucl_YbeY"/>
    <property type="match status" value="1"/>
</dbReference>
<dbReference type="InterPro" id="IPR023091">
    <property type="entry name" value="MetalPrtase_cat_dom_sf_prd"/>
</dbReference>
<dbReference type="InterPro" id="IPR002036">
    <property type="entry name" value="YbeY"/>
</dbReference>
<dbReference type="InterPro" id="IPR020549">
    <property type="entry name" value="YbeY_CS"/>
</dbReference>
<dbReference type="NCBIfam" id="TIGR00043">
    <property type="entry name" value="rRNA maturation RNase YbeY"/>
    <property type="match status" value="1"/>
</dbReference>
<dbReference type="PANTHER" id="PTHR46986">
    <property type="entry name" value="ENDORIBONUCLEASE YBEY, CHLOROPLASTIC"/>
    <property type="match status" value="1"/>
</dbReference>
<dbReference type="PANTHER" id="PTHR46986:SF1">
    <property type="entry name" value="ENDORIBONUCLEASE YBEY, CHLOROPLASTIC"/>
    <property type="match status" value="1"/>
</dbReference>
<dbReference type="Pfam" id="PF02130">
    <property type="entry name" value="YbeY"/>
    <property type="match status" value="1"/>
</dbReference>
<dbReference type="SUPFAM" id="SSF55486">
    <property type="entry name" value="Metalloproteases ('zincins'), catalytic domain"/>
    <property type="match status" value="1"/>
</dbReference>
<dbReference type="PROSITE" id="PS01306">
    <property type="entry name" value="UPF0054"/>
    <property type="match status" value="1"/>
</dbReference>
<protein>
    <recommendedName>
        <fullName evidence="1">Endoribonuclease YbeY</fullName>
        <ecNumber evidence="1">3.1.-.-</ecNumber>
    </recommendedName>
</protein>
<sequence>MIELDLQCASTGAAPAAADLQRWCELALRQRSGDSELTIRLVDEEEGRELNRTWRQKDYATNVLSFPADVPDEFLDIPLLGDLVICVPVVEREAAEQGKTLDAHWAHLVIHGCLHLLGYDHIEDAEAEEMEALERQLLAELGHPDPYAEDSPETGICKDS</sequence>
<feature type="chain" id="PRO_1000000735" description="Endoribonuclease YbeY">
    <location>
        <begin position="1"/>
        <end position="160"/>
    </location>
</feature>
<feature type="binding site" evidence="1">
    <location>
        <position position="111"/>
    </location>
    <ligand>
        <name>Zn(2+)</name>
        <dbReference type="ChEBI" id="CHEBI:29105"/>
        <note>catalytic</note>
    </ligand>
</feature>
<feature type="binding site" evidence="1">
    <location>
        <position position="115"/>
    </location>
    <ligand>
        <name>Zn(2+)</name>
        <dbReference type="ChEBI" id="CHEBI:29105"/>
        <note>catalytic</note>
    </ligand>
</feature>
<feature type="binding site" evidence="1">
    <location>
        <position position="121"/>
    </location>
    <ligand>
        <name>Zn(2+)</name>
        <dbReference type="ChEBI" id="CHEBI:29105"/>
        <note>catalytic</note>
    </ligand>
</feature>
<comment type="function">
    <text evidence="1">Single strand-specific metallo-endoribonuclease involved in late-stage 70S ribosome quality control and in maturation of the 3' terminus of the 16S rRNA.</text>
</comment>
<comment type="cofactor">
    <cofactor evidence="1">
        <name>Zn(2+)</name>
        <dbReference type="ChEBI" id="CHEBI:29105"/>
    </cofactor>
    <text evidence="1">Binds 1 zinc ion.</text>
</comment>
<comment type="subcellular location">
    <subcellularLocation>
        <location evidence="1">Cytoplasm</location>
    </subcellularLocation>
</comment>
<comment type="similarity">
    <text evidence="1">Belongs to the endoribonuclease YbeY family.</text>
</comment>